<feature type="chain" id="PRO_0000290360" description="General transcription and DNA repair factor IIH helicase/translocase subunit XPB">
    <location>
        <begin position="1"/>
        <end position="782"/>
    </location>
</feature>
<feature type="domain" description="Helicase ATP-binding" evidence="4">
    <location>
        <begin position="327"/>
        <end position="488"/>
    </location>
</feature>
<feature type="domain" description="Helicase C-terminal" evidence="5">
    <location>
        <begin position="542"/>
        <end position="702"/>
    </location>
</feature>
<feature type="region of interest" description="Disordered" evidence="6">
    <location>
        <begin position="1"/>
        <end position="51"/>
    </location>
</feature>
<feature type="region of interest" description="Disordered" evidence="6">
    <location>
        <begin position="218"/>
        <end position="241"/>
    </location>
</feature>
<feature type="short sequence motif" description="Nuclear localization signal" evidence="3">
    <location>
        <begin position="6"/>
        <end position="18"/>
    </location>
</feature>
<feature type="short sequence motif" description="DEVH box">
    <location>
        <begin position="441"/>
        <end position="444"/>
    </location>
</feature>
<feature type="compositionally biased region" description="Basic and acidic residues" evidence="6">
    <location>
        <begin position="1"/>
        <end position="11"/>
    </location>
</feature>
<feature type="compositionally biased region" description="Acidic residues" evidence="6">
    <location>
        <begin position="21"/>
        <end position="30"/>
    </location>
</feature>
<feature type="compositionally biased region" description="Polar residues" evidence="6">
    <location>
        <begin position="218"/>
        <end position="236"/>
    </location>
</feature>
<feature type="binding site" evidence="4">
    <location>
        <begin position="340"/>
        <end position="347"/>
    </location>
    <ligand>
        <name>ATP</name>
        <dbReference type="ChEBI" id="CHEBI:30616"/>
    </ligand>
</feature>
<feature type="modified residue" description="Phosphoserine" evidence="2">
    <location>
        <position position="686"/>
    </location>
</feature>
<feature type="modified residue" description="Phosphoserine; by CK2" evidence="2">
    <location>
        <position position="751"/>
    </location>
</feature>
<proteinExistence type="evidence at transcript level"/>
<name>ERCC3_PONAB</name>
<keyword id="KW-0067">ATP-binding</keyword>
<keyword id="KW-0227">DNA damage</keyword>
<keyword id="KW-0234">DNA repair</keyword>
<keyword id="KW-0238">DNA-binding</keyword>
<keyword id="KW-0347">Helicase</keyword>
<keyword id="KW-0378">Hydrolase</keyword>
<keyword id="KW-0413">Isomerase</keyword>
<keyword id="KW-0547">Nucleotide-binding</keyword>
<keyword id="KW-0539">Nucleus</keyword>
<keyword id="KW-0597">Phosphoprotein</keyword>
<keyword id="KW-1185">Reference proteome</keyword>
<keyword id="KW-0804">Transcription</keyword>
<keyword id="KW-0805">Transcription regulation</keyword>
<sequence length="782" mass="89252">MGKRDRADRDKKKSRKRHYEDEEDDEEDAPGNDPQEAVPSAAGKQVDESGTKVDEYGAKDYRLQMPLKDDHTSRPLWVAPDGHIFLEAFSPVYKYAQDFLVAIAESVCRPTHVHEYKLTAYSLYAAVSVGLQTSDITEYLRKLSKTGVPDGIMQFIKLCTVSYGKVKLVLKHNRYFVESSHPDVIQHLLQDPVIRECRLRNSEGEATELITETFTSKSAISKTAESSGGPSTSRVTDPQGKSDIPMDLFDFYEQMDKDEEEEEETQTVSFEVKQEMIEELQKRCIHLEYPLLAEYDFRNDSVNPDINIDLKPTAVLRPYQEKSLRKMFGNGRARSGVIVLPCGAGKSLVGVTAACTVRKRCLVLGNSAVSVEQWKAQFKMWSTIDDSQICRFTSDAKDKPIGCSVAISTYSMLGHTTKRSWEAERVMEWLKTQEWGLMILDEVHTIPAKMFRRVLTIVQAHCKLGLTATLVREDDKIVDLNFLIGPKLYEANWMELQNNGYIAKVQCAEVWCPMSPEFYREYVAIKTKKRILLYTMNPNKFRACQFLIKFHERRNDKIIVFADNVFALKEYAIRLNKPYIYGPTSQGERMQILQNFKHNPKINTIFISKVGDTSFDLPEANVLIQISSHGGSRRQEAQRLGRVLRAKKGMVAEEYNAFFYSLVSQDTQEMAYSTKRQRFLVDQGYSFKVITKLAGMEEEDLAFSTKEEQQQLLQKVLAATDLDAEEEVVAGEFGSRSSQASRRFGTMSSMSGADDTVYMEYHSSRSKAPSKHVHPLFKRFRK</sequence>
<comment type="function">
    <text evidence="2">ATP-dependent 3'-5' DNA helicase/translocase; binds dsDNA rather than ssDNA, unzipping it in a translocase rather than classical helicase activity. Component of the general transcription and DNA repair factor IIH (TFIIH) core complex. When complexed to CDK-activating kinase (CAK), involved in RNA transcription by RNA polymerase II. The ATPase activity of XPB/ERCC3, but not its helicase activity, is required for DNA opening; it may wrap around the damaged DNA wedging it open, causing localized melting and twisting that allows XPD/ERCC2 helicase to anchor. The ATP-dependent helicase activity of XPB/ERCC3 may be required for promoter escape. Also involved in transcription-coupled nucleotide excision repair (NER) of damaged DNA. In NER, TFIIH acts by opening DNA around the lesion to allow the excision of the damaged oligonucleotide and its replacement by a new DNA fragment. The structure of the TFIIH transcription complex differs from the NER-TFIIH complex; large movements by XPD/ERCC2 and XPB/ERCC3 are stabilized by XPA.</text>
</comment>
<comment type="catalytic activity">
    <reaction evidence="2">
        <text>Couples ATP hydrolysis with the unwinding of duplex DNA by translocating in the 3'-5' direction.</text>
        <dbReference type="EC" id="5.6.2.4"/>
    </reaction>
</comment>
<comment type="catalytic activity">
    <reaction evidence="2">
        <text>ATP + H2O = ADP + phosphate + H(+)</text>
        <dbReference type="Rhea" id="RHEA:13065"/>
        <dbReference type="ChEBI" id="CHEBI:15377"/>
        <dbReference type="ChEBI" id="CHEBI:15378"/>
        <dbReference type="ChEBI" id="CHEBI:30616"/>
        <dbReference type="ChEBI" id="CHEBI:43474"/>
        <dbReference type="ChEBI" id="CHEBI:456216"/>
        <dbReference type="EC" id="5.6.2.4"/>
    </reaction>
</comment>
<comment type="activity regulation">
    <text evidence="2">Phosphorylation on Ser-751 by CK2 controls the 5'-excision activity of ERCC1-XPF endonuclease; phosphorylated protein inhibits the excision activity and thus NER. ATPase activity is stimulated by TFIIH subunit p52 (GTF2H4). DNA translocase activity by this subunit in TFIIH is stimulated by XPA, ERCC5/XPG and XFP plus ERCC1.</text>
</comment>
<comment type="subunit">
    <text evidence="2">Component of the 7-subunit TFIIH core complex composed of XPB/ERCC3, XPD/ERCC2, GTF2H1, GTF2H2, GTF2H3, GTF2H4 and GTF2H5, which is active in NER. The core complex associates with the 3-subunit CDK-activating kinase (CAK) module composed of CCNH/cyclin H, CDK7 and MNAT1 to form the 10-subunit holoenzyme (holo-TFIIH) active in transcription. Interacts with PUF60. Interacts with ATF7IP. Interacts with KAT2A; leading to KAT2A recruitment to promoters and acetylation of histones. Part of TBP-based Pol II pre-initiation complex (PIC), in which Pol II core assembles with general transcription factors and other specific initiation factors including GTF2E1, GTF2E2, GTF2F1, GTF2F2, TCEA1, ERCC2, ERCC3, GTF2H2, GTF2H3, GTF2H4, GTF2H5, GTF2A1, GTF2A2, GTF2B and TBP; this large multi-subunit PIC complex mediates DNA unwinding and targets Pol II core to the transcription start site where the first phosphodiester bond forms.</text>
</comment>
<comment type="subcellular location">
    <subcellularLocation>
        <location evidence="1">Nucleus</location>
    </subcellularLocation>
</comment>
<comment type="PTM">
    <text evidence="2">Phosphorylation on Ser-751 by CK2 controls the 5'-excision activity of ERCC1-XPF endonuclease; phosphorylated protein inhibits the excision activity and thus NER. Dephosphorylation reactivates the 5'-excision step. Phosphorylation has no effect on transcription or the 3'-5' helicase activity.</text>
</comment>
<comment type="similarity">
    <text evidence="7">Belongs to the helicase family. RAD25/XPB subfamily.</text>
</comment>
<protein>
    <recommendedName>
        <fullName>General transcription and DNA repair factor IIH helicase/translocase subunit XPB</fullName>
        <shortName>TFIIH subunit XPB</shortName>
        <ecNumber evidence="7">5.6.2.4</ecNumber>
    </recommendedName>
    <alternativeName>
        <fullName evidence="7">DNA 3'-5' helicase/translocase XPB</fullName>
    </alternativeName>
    <alternativeName>
        <fullName>DNA excision repair protein ERCC-3</fullName>
    </alternativeName>
</protein>
<accession>Q5RA62</accession>
<gene>
    <name type="primary">ERCC3</name>
</gene>
<evidence type="ECO:0000250" key="1"/>
<evidence type="ECO:0000250" key="2">
    <source>
        <dbReference type="UniProtKB" id="P19447"/>
    </source>
</evidence>
<evidence type="ECO:0000255" key="3"/>
<evidence type="ECO:0000255" key="4">
    <source>
        <dbReference type="PROSITE-ProRule" id="PRU00541"/>
    </source>
</evidence>
<evidence type="ECO:0000255" key="5">
    <source>
        <dbReference type="PROSITE-ProRule" id="PRU00542"/>
    </source>
</evidence>
<evidence type="ECO:0000256" key="6">
    <source>
        <dbReference type="SAM" id="MobiDB-lite"/>
    </source>
</evidence>
<evidence type="ECO:0000305" key="7"/>
<organism>
    <name type="scientific">Pongo abelii</name>
    <name type="common">Sumatran orangutan</name>
    <name type="synonym">Pongo pygmaeus abelii</name>
    <dbReference type="NCBI Taxonomy" id="9601"/>
    <lineage>
        <taxon>Eukaryota</taxon>
        <taxon>Metazoa</taxon>
        <taxon>Chordata</taxon>
        <taxon>Craniata</taxon>
        <taxon>Vertebrata</taxon>
        <taxon>Euteleostomi</taxon>
        <taxon>Mammalia</taxon>
        <taxon>Eutheria</taxon>
        <taxon>Euarchontoglires</taxon>
        <taxon>Primates</taxon>
        <taxon>Haplorrhini</taxon>
        <taxon>Catarrhini</taxon>
        <taxon>Hominidae</taxon>
        <taxon>Pongo</taxon>
    </lineage>
</organism>
<dbReference type="EC" id="5.6.2.4" evidence="7"/>
<dbReference type="EMBL" id="CR859159">
    <property type="protein sequence ID" value="CAH91348.1"/>
    <property type="molecule type" value="mRNA"/>
</dbReference>
<dbReference type="RefSeq" id="NP_001125797.1">
    <property type="nucleotide sequence ID" value="NM_001132325.1"/>
</dbReference>
<dbReference type="SMR" id="Q5RA62"/>
<dbReference type="FunCoup" id="Q5RA62">
    <property type="interactions" value="3284"/>
</dbReference>
<dbReference type="STRING" id="9601.ENSPPYP00000014246"/>
<dbReference type="GeneID" id="100172725"/>
<dbReference type="KEGG" id="pon:100172725"/>
<dbReference type="CTD" id="2071"/>
<dbReference type="eggNOG" id="KOG1123">
    <property type="taxonomic scope" value="Eukaryota"/>
</dbReference>
<dbReference type="InParanoid" id="Q5RA62"/>
<dbReference type="OrthoDB" id="10262986at2759"/>
<dbReference type="Proteomes" id="UP000001595">
    <property type="component" value="Unplaced"/>
</dbReference>
<dbReference type="GO" id="GO:0000112">
    <property type="term" value="C:nucleotide-excision repair factor 3 complex"/>
    <property type="evidence" value="ECO:0007669"/>
    <property type="project" value="TreeGrafter"/>
</dbReference>
<dbReference type="GO" id="GO:0000439">
    <property type="term" value="C:transcription factor TFIIH core complex"/>
    <property type="evidence" value="ECO:0000250"/>
    <property type="project" value="UniProtKB"/>
</dbReference>
<dbReference type="GO" id="GO:0005675">
    <property type="term" value="C:transcription factor TFIIH holo complex"/>
    <property type="evidence" value="ECO:0007669"/>
    <property type="project" value="TreeGrafter"/>
</dbReference>
<dbReference type="GO" id="GO:0097550">
    <property type="term" value="C:transcription preinitiation complex"/>
    <property type="evidence" value="ECO:0007669"/>
    <property type="project" value="TreeGrafter"/>
</dbReference>
<dbReference type="GO" id="GO:0043138">
    <property type="term" value="F:3'-5' DNA helicase activity"/>
    <property type="evidence" value="ECO:0000250"/>
    <property type="project" value="UniProtKB"/>
</dbReference>
<dbReference type="GO" id="GO:0005524">
    <property type="term" value="F:ATP binding"/>
    <property type="evidence" value="ECO:0007669"/>
    <property type="project" value="UniProtKB-KW"/>
</dbReference>
<dbReference type="GO" id="GO:0016887">
    <property type="term" value="F:ATP hydrolysis activity"/>
    <property type="evidence" value="ECO:0000250"/>
    <property type="project" value="UniProtKB"/>
</dbReference>
<dbReference type="GO" id="GO:0003677">
    <property type="term" value="F:DNA binding"/>
    <property type="evidence" value="ECO:0007669"/>
    <property type="project" value="UniProtKB-KW"/>
</dbReference>
<dbReference type="GO" id="GO:0006915">
    <property type="term" value="P:apoptotic process"/>
    <property type="evidence" value="ECO:0000250"/>
    <property type="project" value="UniProtKB"/>
</dbReference>
<dbReference type="GO" id="GO:0006281">
    <property type="term" value="P:DNA repair"/>
    <property type="evidence" value="ECO:0000250"/>
    <property type="project" value="UniProtKB"/>
</dbReference>
<dbReference type="GO" id="GO:0006265">
    <property type="term" value="P:DNA topological change"/>
    <property type="evidence" value="ECO:0000250"/>
    <property type="project" value="UniProtKB"/>
</dbReference>
<dbReference type="GO" id="GO:0048568">
    <property type="term" value="P:embryonic organ development"/>
    <property type="evidence" value="ECO:0007669"/>
    <property type="project" value="TreeGrafter"/>
</dbReference>
<dbReference type="GO" id="GO:0035315">
    <property type="term" value="P:hair cell differentiation"/>
    <property type="evidence" value="ECO:0000250"/>
    <property type="project" value="UniProtKB"/>
</dbReference>
<dbReference type="GO" id="GO:0006289">
    <property type="term" value="P:nucleotide-excision repair"/>
    <property type="evidence" value="ECO:0000250"/>
    <property type="project" value="UniProtKB"/>
</dbReference>
<dbReference type="GO" id="GO:0008104">
    <property type="term" value="P:protein localization"/>
    <property type="evidence" value="ECO:0000250"/>
    <property type="project" value="UniProtKB"/>
</dbReference>
<dbReference type="GO" id="GO:1901990">
    <property type="term" value="P:regulation of mitotic cell cycle phase transition"/>
    <property type="evidence" value="ECO:0000250"/>
    <property type="project" value="UniProtKB"/>
</dbReference>
<dbReference type="GO" id="GO:0006979">
    <property type="term" value="P:response to oxidative stress"/>
    <property type="evidence" value="ECO:0000250"/>
    <property type="project" value="UniProtKB"/>
</dbReference>
<dbReference type="GO" id="GO:0009411">
    <property type="term" value="P:response to UV"/>
    <property type="evidence" value="ECO:0000250"/>
    <property type="project" value="UniProtKB"/>
</dbReference>
<dbReference type="GO" id="GO:0006366">
    <property type="term" value="P:transcription by RNA polymerase II"/>
    <property type="evidence" value="ECO:0000250"/>
    <property type="project" value="UniProtKB"/>
</dbReference>
<dbReference type="GO" id="GO:0006367">
    <property type="term" value="P:transcription initiation at RNA polymerase II promoter"/>
    <property type="evidence" value="ECO:0007669"/>
    <property type="project" value="InterPro"/>
</dbReference>
<dbReference type="GO" id="GO:0006283">
    <property type="term" value="P:transcription-coupled nucleotide-excision repair"/>
    <property type="evidence" value="ECO:0000250"/>
    <property type="project" value="UniProtKB"/>
</dbReference>
<dbReference type="CDD" id="cd18029">
    <property type="entry name" value="DEXHc_XPB"/>
    <property type="match status" value="1"/>
</dbReference>
<dbReference type="CDD" id="cd18789">
    <property type="entry name" value="SF2_C_XPB"/>
    <property type="match status" value="1"/>
</dbReference>
<dbReference type="FunFam" id="3.40.50.300:FF:000077">
    <property type="entry name" value="Probable DNA repair helicase RAD25"/>
    <property type="match status" value="1"/>
</dbReference>
<dbReference type="FunFam" id="3.40.50.300:FF:000117">
    <property type="entry name" value="Putative DNA repair helicase rad25"/>
    <property type="match status" value="1"/>
</dbReference>
<dbReference type="Gene3D" id="3.40.50.300">
    <property type="entry name" value="P-loop containing nucleotide triphosphate hydrolases"/>
    <property type="match status" value="2"/>
</dbReference>
<dbReference type="InterPro" id="IPR050615">
    <property type="entry name" value="ATP-dep_DNA_Helicase"/>
</dbReference>
<dbReference type="InterPro" id="IPR032438">
    <property type="entry name" value="ERCC3_RAD25_C"/>
</dbReference>
<dbReference type="InterPro" id="IPR006935">
    <property type="entry name" value="Helicase/UvrB_N"/>
</dbReference>
<dbReference type="InterPro" id="IPR014001">
    <property type="entry name" value="Helicase_ATP-bd"/>
</dbReference>
<dbReference type="InterPro" id="IPR001650">
    <property type="entry name" value="Helicase_C-like"/>
</dbReference>
<dbReference type="InterPro" id="IPR027417">
    <property type="entry name" value="P-loop_NTPase"/>
</dbReference>
<dbReference type="InterPro" id="IPR001161">
    <property type="entry name" value="XPB/Ssl2"/>
</dbReference>
<dbReference type="InterPro" id="IPR032830">
    <property type="entry name" value="XPB/Ssl2_N"/>
</dbReference>
<dbReference type="NCBIfam" id="TIGR00603">
    <property type="entry name" value="rad25"/>
    <property type="match status" value="1"/>
</dbReference>
<dbReference type="PANTHER" id="PTHR11274:SF0">
    <property type="entry name" value="GENERAL TRANSCRIPTION AND DNA REPAIR FACTOR IIH HELICASE SUBUNIT XPB"/>
    <property type="match status" value="1"/>
</dbReference>
<dbReference type="PANTHER" id="PTHR11274">
    <property type="entry name" value="RAD25/XP-B DNA REPAIR HELICASE"/>
    <property type="match status" value="1"/>
</dbReference>
<dbReference type="Pfam" id="PF16203">
    <property type="entry name" value="ERCC3_RAD25_C"/>
    <property type="match status" value="1"/>
</dbReference>
<dbReference type="Pfam" id="PF13625">
    <property type="entry name" value="Helicase_C_3"/>
    <property type="match status" value="1"/>
</dbReference>
<dbReference type="Pfam" id="PF04851">
    <property type="entry name" value="ResIII"/>
    <property type="match status" value="1"/>
</dbReference>
<dbReference type="PRINTS" id="PR00851">
    <property type="entry name" value="XRODRMPGMNTB"/>
</dbReference>
<dbReference type="SMART" id="SM00487">
    <property type="entry name" value="DEXDc"/>
    <property type="match status" value="1"/>
</dbReference>
<dbReference type="SMART" id="SM00490">
    <property type="entry name" value="HELICc"/>
    <property type="match status" value="1"/>
</dbReference>
<dbReference type="SUPFAM" id="SSF52540">
    <property type="entry name" value="P-loop containing nucleoside triphosphate hydrolases"/>
    <property type="match status" value="2"/>
</dbReference>
<dbReference type="PROSITE" id="PS51192">
    <property type="entry name" value="HELICASE_ATP_BIND_1"/>
    <property type="match status" value="1"/>
</dbReference>
<dbReference type="PROSITE" id="PS51194">
    <property type="entry name" value="HELICASE_CTER"/>
    <property type="match status" value="1"/>
</dbReference>
<reference key="1">
    <citation type="submission" date="2004-11" db="EMBL/GenBank/DDBJ databases">
        <authorList>
            <consortium name="The German cDNA consortium"/>
        </authorList>
    </citation>
    <scope>NUCLEOTIDE SEQUENCE [LARGE SCALE MRNA]</scope>
    <source>
        <tissue>Heart</tissue>
    </source>
</reference>